<dbReference type="EC" id="3.4.21.-"/>
<dbReference type="EMBL" id="AF176679">
    <property type="protein sequence ID" value="AAF25008.1"/>
    <property type="molecule type" value="mRNA"/>
</dbReference>
<dbReference type="SMR" id="Q9PTL3"/>
<dbReference type="MEROPS" id="S01.350"/>
<dbReference type="GO" id="GO:0005576">
    <property type="term" value="C:extracellular region"/>
    <property type="evidence" value="ECO:0007669"/>
    <property type="project" value="UniProtKB-SubCell"/>
</dbReference>
<dbReference type="GO" id="GO:0030141">
    <property type="term" value="C:secretory granule"/>
    <property type="evidence" value="ECO:0007669"/>
    <property type="project" value="TreeGrafter"/>
</dbReference>
<dbReference type="GO" id="GO:0004252">
    <property type="term" value="F:serine-type endopeptidase activity"/>
    <property type="evidence" value="ECO:0007669"/>
    <property type="project" value="InterPro"/>
</dbReference>
<dbReference type="GO" id="GO:0090729">
    <property type="term" value="F:toxin activity"/>
    <property type="evidence" value="ECO:0007669"/>
    <property type="project" value="UniProtKB-KW"/>
</dbReference>
<dbReference type="GO" id="GO:0006508">
    <property type="term" value="P:proteolysis"/>
    <property type="evidence" value="ECO:0007669"/>
    <property type="project" value="UniProtKB-KW"/>
</dbReference>
<dbReference type="CDD" id="cd00190">
    <property type="entry name" value="Tryp_SPc"/>
    <property type="match status" value="1"/>
</dbReference>
<dbReference type="FunFam" id="2.40.10.10:FF:000158">
    <property type="entry name" value="Thrombin-like enzyme saxthrombin"/>
    <property type="match status" value="1"/>
</dbReference>
<dbReference type="Gene3D" id="2.40.10.10">
    <property type="entry name" value="Trypsin-like serine proteases"/>
    <property type="match status" value="2"/>
</dbReference>
<dbReference type="InterPro" id="IPR009003">
    <property type="entry name" value="Peptidase_S1_PA"/>
</dbReference>
<dbReference type="InterPro" id="IPR043504">
    <property type="entry name" value="Peptidase_S1_PA_chymotrypsin"/>
</dbReference>
<dbReference type="InterPro" id="IPR001314">
    <property type="entry name" value="Peptidase_S1A"/>
</dbReference>
<dbReference type="InterPro" id="IPR001254">
    <property type="entry name" value="Trypsin_dom"/>
</dbReference>
<dbReference type="InterPro" id="IPR018114">
    <property type="entry name" value="TRYPSIN_HIS"/>
</dbReference>
<dbReference type="InterPro" id="IPR033116">
    <property type="entry name" value="TRYPSIN_SER"/>
</dbReference>
<dbReference type="PANTHER" id="PTHR24271:SF47">
    <property type="entry name" value="KALLIKREIN-1"/>
    <property type="match status" value="1"/>
</dbReference>
<dbReference type="PANTHER" id="PTHR24271">
    <property type="entry name" value="KALLIKREIN-RELATED"/>
    <property type="match status" value="1"/>
</dbReference>
<dbReference type="Pfam" id="PF00089">
    <property type="entry name" value="Trypsin"/>
    <property type="match status" value="1"/>
</dbReference>
<dbReference type="PRINTS" id="PR00722">
    <property type="entry name" value="CHYMOTRYPSIN"/>
</dbReference>
<dbReference type="SMART" id="SM00020">
    <property type="entry name" value="Tryp_SPc"/>
    <property type="match status" value="1"/>
</dbReference>
<dbReference type="SUPFAM" id="SSF50494">
    <property type="entry name" value="Trypsin-like serine proteases"/>
    <property type="match status" value="1"/>
</dbReference>
<dbReference type="PROSITE" id="PS50240">
    <property type="entry name" value="TRYPSIN_DOM"/>
    <property type="match status" value="1"/>
</dbReference>
<dbReference type="PROSITE" id="PS00134">
    <property type="entry name" value="TRYPSIN_HIS"/>
    <property type="match status" value="1"/>
</dbReference>
<dbReference type="PROSITE" id="PS00135">
    <property type="entry name" value="TRYPSIN_SER"/>
    <property type="match status" value="1"/>
</dbReference>
<feature type="signal peptide" evidence="2">
    <location>
        <begin position="1"/>
        <end position="18"/>
    </location>
</feature>
<feature type="propeptide" id="PRO_0000294980" evidence="1">
    <location>
        <begin position="19"/>
        <end position="24"/>
    </location>
</feature>
<feature type="chain" id="PRO_0000294981" description="Snake venom serine protease salmonase">
    <location>
        <begin position="25"/>
        <end position="257"/>
    </location>
</feature>
<feature type="domain" description="Peptidase S1" evidence="3">
    <location>
        <begin position="25"/>
        <end position="248"/>
    </location>
</feature>
<feature type="active site" description="Charge relay system" evidence="1">
    <location>
        <position position="64"/>
    </location>
</feature>
<feature type="active site" description="Charge relay system" evidence="1">
    <location>
        <position position="109"/>
    </location>
</feature>
<feature type="active site" description="Charge relay system" evidence="1">
    <location>
        <position position="203"/>
    </location>
</feature>
<feature type="glycosylation site" description="N-linked (GlcNAc...) asparagine" evidence="2">
    <location>
        <position position="78"/>
    </location>
</feature>
<feature type="disulfide bond" evidence="3">
    <location>
        <begin position="31"/>
        <end position="162"/>
    </location>
</feature>
<feature type="disulfide bond" evidence="3">
    <location>
        <begin position="49"/>
        <end position="65"/>
    </location>
</feature>
<feature type="disulfide bond" evidence="3">
    <location>
        <begin position="141"/>
        <end position="209"/>
    </location>
</feature>
<feature type="disulfide bond" evidence="3">
    <location>
        <begin position="173"/>
        <end position="188"/>
    </location>
</feature>
<feature type="disulfide bond" evidence="3">
    <location>
        <begin position="199"/>
        <end position="224"/>
    </location>
</feature>
<name>VSPSA_GLOBR</name>
<protein>
    <recommendedName>
        <fullName>Snake venom serine protease salmonase</fullName>
        <shortName>SVSP</shortName>
        <ecNumber>3.4.21.-</ecNumber>
    </recommendedName>
</protein>
<comment type="function">
    <text evidence="1">Snake venom serine protease that may act in the hemostasis system of the prey.</text>
</comment>
<comment type="subunit">
    <text evidence="1">Monomer.</text>
</comment>
<comment type="subcellular location">
    <subcellularLocation>
        <location evidence="1">Secreted</location>
    </subcellularLocation>
</comment>
<comment type="tissue specificity">
    <text>Expressed by the venom gland.</text>
</comment>
<comment type="similarity">
    <text evidence="3">Belongs to the peptidase S1 family. Snake venom subfamily.</text>
</comment>
<evidence type="ECO:0000250" key="1"/>
<evidence type="ECO:0000255" key="2"/>
<evidence type="ECO:0000255" key="3">
    <source>
        <dbReference type="PROSITE-ProRule" id="PRU00274"/>
    </source>
</evidence>
<organism>
    <name type="scientific">Gloydius brevicauda</name>
    <name type="common">Korean slamosa snake</name>
    <name type="synonym">Agkistrodon halys brevicaudus</name>
    <dbReference type="NCBI Taxonomy" id="3148161"/>
    <lineage>
        <taxon>Eukaryota</taxon>
        <taxon>Metazoa</taxon>
        <taxon>Chordata</taxon>
        <taxon>Craniata</taxon>
        <taxon>Vertebrata</taxon>
        <taxon>Euteleostomi</taxon>
        <taxon>Lepidosauria</taxon>
        <taxon>Squamata</taxon>
        <taxon>Bifurcata</taxon>
        <taxon>Unidentata</taxon>
        <taxon>Episquamata</taxon>
        <taxon>Toxicofera</taxon>
        <taxon>Serpentes</taxon>
        <taxon>Colubroidea</taxon>
        <taxon>Viperidae</taxon>
        <taxon>Crotalinae</taxon>
        <taxon>Gloydius</taxon>
    </lineage>
</organism>
<keyword id="KW-1015">Disulfide bond</keyword>
<keyword id="KW-0325">Glycoprotein</keyword>
<keyword id="KW-1199">Hemostasis impairing toxin</keyword>
<keyword id="KW-0378">Hydrolase</keyword>
<keyword id="KW-0645">Protease</keyword>
<keyword id="KW-0964">Secreted</keyword>
<keyword id="KW-0720">Serine protease</keyword>
<keyword id="KW-0732">Signal</keyword>
<keyword id="KW-0800">Toxin</keyword>
<keyword id="KW-0865">Zymogen</keyword>
<sequence length="257" mass="28921">MVLIRVLVNFLILQLSYAQKSSELVIGGDECNINEHRFLALLYSERFQCGGTLINEEWVLTAAHCDMRNMYIYLGVHNVSVQYDDEQRRYPKKKYFRLSSRNYNQWDKDIMLIRLNRPLRNSAHIAPLSLPSNPPSVGSVCRIMGWGTITSPQVTFPDVLHCANINIFDYEVCRAAYPELPATRRTLCAGILEGGKDSCNGDSGGPLICNGQFQGIAYWGADTCAQPREPGLYTKVFDYIDWIQSIIAGNTAVTCPP</sequence>
<proteinExistence type="evidence at transcript level"/>
<reference key="1">
    <citation type="submission" date="1999-08" db="EMBL/GenBank/DDBJ databases">
        <title>Salmonase, a two chain direct acting fibrinolytic enzyme from snake venom.</title>
        <authorList>
            <person name="Chung K.H."/>
            <person name="Koh Y.S."/>
            <person name="Koo B.H."/>
            <person name="Sohn Y.D."/>
            <person name="Jang S.Y."/>
            <person name="Cho S.H."/>
            <person name="Kim D.S."/>
        </authorList>
    </citation>
    <scope>NUCLEOTIDE SEQUENCE [MRNA]</scope>
    <source>
        <tissue>Venom gland</tissue>
    </source>
</reference>
<accession>Q9PTL3</accession>